<sequence length="9" mass="1020">ADYLQLARA</sequence>
<protein>
    <recommendedName>
        <fullName evidence="4">Extended FMRFamide-2</fullName>
        <shortName evidence="4">FMRFa-2</shortName>
    </recommendedName>
</protein>
<organism>
    <name type="scientific">Mantophasma kudubergense</name>
    <name type="common">Gladiator</name>
    <name type="synonym">Heel-walker</name>
    <dbReference type="NCBI Taxonomy" id="1037657"/>
    <lineage>
        <taxon>Eukaryota</taxon>
        <taxon>Metazoa</taxon>
        <taxon>Ecdysozoa</taxon>
        <taxon>Arthropoda</taxon>
        <taxon>Hexapoda</taxon>
        <taxon>Insecta</taxon>
        <taxon>Pterygota</taxon>
        <taxon>Neoptera</taxon>
        <taxon>Polyneoptera</taxon>
        <taxon>Mantophasmatodea</taxon>
        <taxon>Mantophasmatidae</taxon>
        <taxon>Mantophasma</taxon>
    </lineage>
</organism>
<dbReference type="GO" id="GO:0005576">
    <property type="term" value="C:extracellular region"/>
    <property type="evidence" value="ECO:0007669"/>
    <property type="project" value="UniProtKB-SubCell"/>
</dbReference>
<dbReference type="GO" id="GO:0007218">
    <property type="term" value="P:neuropeptide signaling pathway"/>
    <property type="evidence" value="ECO:0007669"/>
    <property type="project" value="UniProtKB-KW"/>
</dbReference>
<name>FAR2_MANKU</name>
<evidence type="ECO:0000250" key="1">
    <source>
        <dbReference type="UniProtKB" id="P34405"/>
    </source>
</evidence>
<evidence type="ECO:0000255" key="2"/>
<evidence type="ECO:0000269" key="3">
    <source>
    </source>
</evidence>
<evidence type="ECO:0000303" key="4">
    <source>
    </source>
</evidence>
<evidence type="ECO:0000305" key="5"/>
<evidence type="ECO:0000305" key="6">
    <source>
    </source>
</evidence>
<accession>B0M3C7</accession>
<comment type="function">
    <text evidence="1">FMRFamides and FMRFamide-like peptides are neuropeptides.</text>
</comment>
<comment type="subcellular location">
    <subcellularLocation>
        <location evidence="6">Secreted</location>
    </subcellularLocation>
</comment>
<comment type="similarity">
    <text evidence="2">Belongs to the FARP (FMRF amide related peptide) family.</text>
</comment>
<keyword id="KW-0903">Direct protein sequencing</keyword>
<keyword id="KW-0527">Neuropeptide</keyword>
<keyword id="KW-0964">Secreted</keyword>
<feature type="peptide" id="PRO_0000420773" description="Extended FMRFamide-2" evidence="3">
    <location>
        <begin position="1"/>
        <end position="9"/>
    </location>
</feature>
<feature type="unsure residue" description="L or I" evidence="3">
    <location>
        <position position="4"/>
    </location>
</feature>
<feature type="unsure residue" description="L or I" evidence="3">
    <location>
        <position position="6"/>
    </location>
</feature>
<proteinExistence type="evidence at protein level"/>
<reference evidence="5" key="1">
    <citation type="journal article" date="2012" name="Syst. Biol.">
        <title>Peptidomics-based phylogeny and biogeography of Mantophasmatodea (Hexapoda).</title>
        <authorList>
            <person name="Predel R."/>
            <person name="Neupert S."/>
            <person name="Huetteroth W."/>
            <person name="Kahnt J."/>
            <person name="Waidelich D."/>
            <person name="Roth S."/>
        </authorList>
    </citation>
    <scope>PROTEIN SEQUENCE</scope>
    <source>
        <tissue evidence="3">Thoracic perisympathetic organs</tissue>
    </source>
</reference>